<proteinExistence type="evidence at protein level"/>
<reference evidence="7 17" key="1">
    <citation type="journal article" date="2001" name="Plant Mol. Biol.">
        <title>Identification and molecular characterisation of hordoindolines from barley grain.</title>
        <authorList>
            <person name="Darlington H.F."/>
            <person name="Rouster J."/>
            <person name="Hoffmann L."/>
            <person name="Halford N.G."/>
            <person name="Shewry P.R."/>
            <person name="Simpson D.J."/>
        </authorList>
    </citation>
    <scope>NUCLEOTIDE SEQUENCE [GENOMIC DNA]</scope>
    <scope>PROTEIN SEQUENCE OF 29-38</scope>
    <scope>TISSUE SPECIFICITY</scope>
    <source>
        <strain evidence="4">cv. Chariot</strain>
        <strain evidence="17">cv. Igri</strain>
        <tissue evidence="17">Leaf</tissue>
        <tissue evidence="4">Seed</tissue>
    </source>
</reference>
<reference evidence="7 8" key="2">
    <citation type="submission" date="2006-07" db="EMBL/GenBank/DDBJ databases">
        <title>The variation of hardness locus and endosperm texture in spring cultivars of barley (Hordeum vulgare L.).</title>
        <authorList>
            <person name="Turuspekov Y."/>
            <person name="Beecher B."/>
            <person name="Darlington Y.F."/>
            <person name="Bowman J."/>
            <person name="Blake T.K."/>
            <person name="Giroux M.J."/>
        </authorList>
    </citation>
    <scope>NUCLEOTIDE SEQUENCE [GENOMIC DNA]</scope>
    <scope>VARIANTS LEU-9; HIS-41; ARG-59; HIS-122 AND LEU-141</scope>
    <source>
        <strain evidence="11">cv. Baronesse</strain>
        <strain evidence="14">cv. Chinook</strain>
        <strain evidence="12">cv. Harrington</strain>
        <strain evidence="8">cv. Landrace</strain>
        <strain evidence="13">cv. Lewis</strain>
        <strain evidence="10">cv. Medallion</strain>
        <strain evidence="16">cv. Merlin</strain>
        <strain evidence="15">cv. Morex</strain>
        <strain evidence="9">cv. Steptoe</strain>
    </source>
</reference>
<reference evidence="7" key="3">
    <citation type="journal article" date="2000" name="Electrophoresis">
        <title>Separation and characterization of basic barley seed proteins.</title>
        <authorList>
            <person name="Kristoffersen H.E."/>
            <person name="Flengsrud R."/>
        </authorList>
    </citation>
    <scope>PROTEIN SEQUENCE OF 72-80</scope>
    <source>
        <strain evidence="3">cv. Bomi</strain>
        <tissue evidence="3">Starchy endosperm</tissue>
    </source>
</reference>
<reference evidence="7" key="4">
    <citation type="journal article" date="2002" name="Genome">
        <title>Hordoindolines are associated with a major endosperm-texture QTL in barley (Hordeum vulgare).</title>
        <authorList>
            <person name="Beecher B."/>
            <person name="Bowman J."/>
            <person name="Martin J.M."/>
            <person name="Bettge A.D."/>
            <person name="Morris C.F."/>
            <person name="Blake T.K."/>
            <person name="Giroux M.J."/>
        </authorList>
    </citation>
    <scope>FUNCTION</scope>
</reference>
<protein>
    <recommendedName>
        <fullName>Hordoindoline-B1</fullName>
    </recommendedName>
    <alternativeName>
        <fullName>Puroindoline-B</fullName>
    </alternativeName>
</protein>
<name>HINB1_HORVU</name>
<keyword id="KW-0044">Antibiotic</keyword>
<keyword id="KW-0929">Antimicrobial</keyword>
<keyword id="KW-0903">Direct protein sequencing</keyword>
<keyword id="KW-1015">Disulfide bond</keyword>
<keyword id="KW-0472">Membrane</keyword>
<keyword id="KW-0611">Plant defense</keyword>
<keyword id="KW-0964">Secreted</keyword>
<keyword id="KW-0732">Signal</keyword>
<keyword id="KW-0800">Toxin</keyword>
<accession>Q9FSI9</accession>
<accession>P82940</accession>
<accession>Q0GJ26</accession>
<accession>Q0GJ42</accession>
<accession>Q0GJ69</accession>
<accession>Q0GJ83</accession>
<accession>Q0GJ91</accession>
<gene>
    <name type="primary">HINB-1</name>
    <name type="synonym">HOI-B1</name>
</gene>
<evidence type="ECO:0000250" key="1">
    <source>
        <dbReference type="UniProtKB" id="Q10464"/>
    </source>
</evidence>
<evidence type="ECO:0000255" key="2"/>
<evidence type="ECO:0000269" key="3">
    <source>
    </source>
</evidence>
<evidence type="ECO:0000269" key="4">
    <source>
    </source>
</evidence>
<evidence type="ECO:0000269" key="5">
    <source>
    </source>
</evidence>
<evidence type="ECO:0000269" key="6">
    <source ref="2"/>
</evidence>
<evidence type="ECO:0000305" key="7"/>
<evidence type="ECO:0000312" key="8">
    <source>
        <dbReference type="EMBL" id="ABI18726.1"/>
    </source>
</evidence>
<evidence type="ECO:0000312" key="9">
    <source>
        <dbReference type="EMBL" id="ABI18796.1"/>
    </source>
</evidence>
<evidence type="ECO:0000312" key="10">
    <source>
        <dbReference type="EMBL" id="ABI18797.1"/>
    </source>
</evidence>
<evidence type="ECO:0000312" key="11">
    <source>
        <dbReference type="EMBL" id="ABI18798.1"/>
    </source>
</evidence>
<evidence type="ECO:0000312" key="12">
    <source>
        <dbReference type="EMBL" id="ABI18799.1"/>
    </source>
</evidence>
<evidence type="ECO:0000312" key="13">
    <source>
        <dbReference type="EMBL" id="ABI18800.1"/>
    </source>
</evidence>
<evidence type="ECO:0000312" key="14">
    <source>
        <dbReference type="EMBL" id="ABI18801.1"/>
    </source>
</evidence>
<evidence type="ECO:0000312" key="15">
    <source>
        <dbReference type="EMBL" id="ABI18802.1"/>
    </source>
</evidence>
<evidence type="ECO:0000312" key="16">
    <source>
        <dbReference type="EMBL" id="ABI18803.1"/>
    </source>
</evidence>
<evidence type="ECO:0000312" key="17">
    <source>
        <dbReference type="EMBL" id="CAB92291.2"/>
    </source>
</evidence>
<organism>
    <name type="scientific">Hordeum vulgare</name>
    <name type="common">Barley</name>
    <dbReference type="NCBI Taxonomy" id="4513"/>
    <lineage>
        <taxon>Eukaryota</taxon>
        <taxon>Viridiplantae</taxon>
        <taxon>Streptophyta</taxon>
        <taxon>Embryophyta</taxon>
        <taxon>Tracheophyta</taxon>
        <taxon>Spermatophyta</taxon>
        <taxon>Magnoliopsida</taxon>
        <taxon>Liliopsida</taxon>
        <taxon>Poales</taxon>
        <taxon>Poaceae</taxon>
        <taxon>BOP clade</taxon>
        <taxon>Pooideae</taxon>
        <taxon>Triticodae</taxon>
        <taxon>Triticeae</taxon>
        <taxon>Hordeinae</taxon>
        <taxon>Hordeum</taxon>
    </lineage>
</organism>
<feature type="signal peptide" evidence="2">
    <location>
        <begin position="1"/>
        <end position="19"/>
    </location>
</feature>
<feature type="propeptide" id="PRO_0000309563" evidence="1">
    <location>
        <begin position="20"/>
        <end position="28"/>
    </location>
</feature>
<feature type="chain" id="PRO_0000309564" description="Hordoindoline-B1">
    <location>
        <begin position="29"/>
        <end position="147"/>
    </location>
</feature>
<feature type="sequence variant" evidence="6">
    <original>I</original>
    <variation>L</variation>
    <location>
        <position position="9"/>
    </location>
</feature>
<feature type="sequence variant" evidence="6">
    <original>T</original>
    <variation>I</variation>
    <location>
        <position position="16"/>
    </location>
</feature>
<feature type="sequence variant" evidence="6">
    <original>Q</original>
    <variation>H</variation>
    <location>
        <position position="41"/>
    </location>
</feature>
<feature type="sequence variant" evidence="6">
    <original>T</original>
    <variation>R</variation>
    <location>
        <position position="59"/>
    </location>
</feature>
<feature type="sequence variant" evidence="6">
    <original>Q</original>
    <variation>H</variation>
    <location>
        <position position="122"/>
    </location>
</feature>
<feature type="sequence variant" evidence="6">
    <original>F</original>
    <variation>L</variation>
    <location>
        <position position="141"/>
    </location>
</feature>
<feature type="sequence conflict" description="In Ref. 3; AA sequence." evidence="7" ref="3">
    <original>W</original>
    <variation>M</variation>
    <location>
        <position position="72"/>
    </location>
</feature>
<dbReference type="EMBL" id="AJ276143">
    <property type="protein sequence ID" value="CAB92291.2"/>
    <property type="molecule type" value="Genomic_DNA"/>
</dbReference>
<dbReference type="EMBL" id="DQ862214">
    <property type="protein sequence ID" value="ABI18723.1"/>
    <property type="molecule type" value="Genomic_DNA"/>
</dbReference>
<dbReference type="EMBL" id="DQ862215">
    <property type="protein sequence ID" value="ABI18724.1"/>
    <property type="molecule type" value="Genomic_DNA"/>
</dbReference>
<dbReference type="EMBL" id="DQ862216">
    <property type="protein sequence ID" value="ABI18725.1"/>
    <property type="molecule type" value="Genomic_DNA"/>
</dbReference>
<dbReference type="EMBL" id="DQ862217">
    <property type="protein sequence ID" value="ABI18726.1"/>
    <property type="molecule type" value="Genomic_DNA"/>
</dbReference>
<dbReference type="EMBL" id="DQ862218">
    <property type="protein sequence ID" value="ABI18727.1"/>
    <property type="molecule type" value="Genomic_DNA"/>
</dbReference>
<dbReference type="EMBL" id="DQ862219">
    <property type="protein sequence ID" value="ABI18728.1"/>
    <property type="molecule type" value="Genomic_DNA"/>
</dbReference>
<dbReference type="EMBL" id="DQ862220">
    <property type="protein sequence ID" value="ABI18729.1"/>
    <property type="molecule type" value="Genomic_DNA"/>
</dbReference>
<dbReference type="EMBL" id="DQ862221">
    <property type="protein sequence ID" value="ABI18730.1"/>
    <property type="molecule type" value="Genomic_DNA"/>
</dbReference>
<dbReference type="EMBL" id="DQ862222">
    <property type="protein sequence ID" value="ABI18731.1"/>
    <property type="molecule type" value="Genomic_DNA"/>
</dbReference>
<dbReference type="EMBL" id="DQ862223">
    <property type="protein sequence ID" value="ABI18732.1"/>
    <property type="molecule type" value="Genomic_DNA"/>
</dbReference>
<dbReference type="EMBL" id="DQ862224">
    <property type="protein sequence ID" value="ABI18733.1"/>
    <property type="molecule type" value="Genomic_DNA"/>
</dbReference>
<dbReference type="EMBL" id="DQ862225">
    <property type="protein sequence ID" value="ABI18734.1"/>
    <property type="molecule type" value="Genomic_DNA"/>
</dbReference>
<dbReference type="EMBL" id="DQ862226">
    <property type="protein sequence ID" value="ABI18735.1"/>
    <property type="molecule type" value="Genomic_DNA"/>
</dbReference>
<dbReference type="EMBL" id="DQ862227">
    <property type="protein sequence ID" value="ABI18736.1"/>
    <property type="molecule type" value="Genomic_DNA"/>
</dbReference>
<dbReference type="EMBL" id="DQ862228">
    <property type="protein sequence ID" value="ABI18737.1"/>
    <property type="molecule type" value="Genomic_DNA"/>
</dbReference>
<dbReference type="EMBL" id="DQ862229">
    <property type="protein sequence ID" value="ABI18738.1"/>
    <property type="molecule type" value="Genomic_DNA"/>
</dbReference>
<dbReference type="EMBL" id="DQ862230">
    <property type="protein sequence ID" value="ABI18739.1"/>
    <property type="molecule type" value="Genomic_DNA"/>
</dbReference>
<dbReference type="EMBL" id="DQ862231">
    <property type="protein sequence ID" value="ABI18740.1"/>
    <property type="molecule type" value="Genomic_DNA"/>
</dbReference>
<dbReference type="EMBL" id="DQ862232">
    <property type="protein sequence ID" value="ABI18741.1"/>
    <property type="molecule type" value="Genomic_DNA"/>
</dbReference>
<dbReference type="EMBL" id="DQ862233">
    <property type="protein sequence ID" value="ABI18742.1"/>
    <property type="molecule type" value="Genomic_DNA"/>
</dbReference>
<dbReference type="EMBL" id="DQ862234">
    <property type="protein sequence ID" value="ABI18743.1"/>
    <property type="molecule type" value="Genomic_DNA"/>
</dbReference>
<dbReference type="EMBL" id="DQ862235">
    <property type="protein sequence ID" value="ABI18744.1"/>
    <property type="molecule type" value="Genomic_DNA"/>
</dbReference>
<dbReference type="EMBL" id="DQ862236">
    <property type="protein sequence ID" value="ABI18745.1"/>
    <property type="molecule type" value="Genomic_DNA"/>
</dbReference>
<dbReference type="EMBL" id="DQ862237">
    <property type="protein sequence ID" value="ABI18746.1"/>
    <property type="molecule type" value="Genomic_DNA"/>
</dbReference>
<dbReference type="EMBL" id="DQ862238">
    <property type="protein sequence ID" value="ABI18747.1"/>
    <property type="molecule type" value="Genomic_DNA"/>
</dbReference>
<dbReference type="EMBL" id="DQ862239">
    <property type="protein sequence ID" value="ABI18748.1"/>
    <property type="molecule type" value="Genomic_DNA"/>
</dbReference>
<dbReference type="EMBL" id="DQ862240">
    <property type="protein sequence ID" value="ABI18749.1"/>
    <property type="molecule type" value="Genomic_DNA"/>
</dbReference>
<dbReference type="EMBL" id="DQ862241">
    <property type="protein sequence ID" value="ABI18750.1"/>
    <property type="molecule type" value="Genomic_DNA"/>
</dbReference>
<dbReference type="EMBL" id="DQ862242">
    <property type="protein sequence ID" value="ABI18751.1"/>
    <property type="molecule type" value="Genomic_DNA"/>
</dbReference>
<dbReference type="EMBL" id="DQ862243">
    <property type="protein sequence ID" value="ABI18752.1"/>
    <property type="molecule type" value="Genomic_DNA"/>
</dbReference>
<dbReference type="EMBL" id="DQ862244">
    <property type="protein sequence ID" value="ABI18753.1"/>
    <property type="molecule type" value="Genomic_DNA"/>
</dbReference>
<dbReference type="EMBL" id="DQ862245">
    <property type="protein sequence ID" value="ABI18754.1"/>
    <property type="molecule type" value="Genomic_DNA"/>
</dbReference>
<dbReference type="EMBL" id="DQ862246">
    <property type="protein sequence ID" value="ABI18755.1"/>
    <property type="molecule type" value="Genomic_DNA"/>
</dbReference>
<dbReference type="EMBL" id="DQ862247">
    <property type="protein sequence ID" value="ABI18756.1"/>
    <property type="molecule type" value="Genomic_DNA"/>
</dbReference>
<dbReference type="EMBL" id="DQ862248">
    <property type="protein sequence ID" value="ABI18757.1"/>
    <property type="molecule type" value="Genomic_DNA"/>
</dbReference>
<dbReference type="EMBL" id="DQ862249">
    <property type="protein sequence ID" value="ABI18758.1"/>
    <property type="molecule type" value="Genomic_DNA"/>
</dbReference>
<dbReference type="EMBL" id="DQ862250">
    <property type="protein sequence ID" value="ABI18759.1"/>
    <property type="molecule type" value="Genomic_DNA"/>
</dbReference>
<dbReference type="EMBL" id="DQ862251">
    <property type="protein sequence ID" value="ABI18760.1"/>
    <property type="molecule type" value="Genomic_DNA"/>
</dbReference>
<dbReference type="EMBL" id="DQ862252">
    <property type="protein sequence ID" value="ABI18761.1"/>
    <property type="molecule type" value="Genomic_DNA"/>
</dbReference>
<dbReference type="EMBL" id="DQ862253">
    <property type="protein sequence ID" value="ABI18762.1"/>
    <property type="molecule type" value="Genomic_DNA"/>
</dbReference>
<dbReference type="EMBL" id="DQ862254">
    <property type="protein sequence ID" value="ABI18763.1"/>
    <property type="molecule type" value="Genomic_DNA"/>
</dbReference>
<dbReference type="EMBL" id="DQ862255">
    <property type="protein sequence ID" value="ABI18764.1"/>
    <property type="molecule type" value="Genomic_DNA"/>
</dbReference>
<dbReference type="EMBL" id="DQ862256">
    <property type="protein sequence ID" value="ABI18765.1"/>
    <property type="molecule type" value="Genomic_DNA"/>
</dbReference>
<dbReference type="EMBL" id="DQ862257">
    <property type="protein sequence ID" value="ABI18766.1"/>
    <property type="molecule type" value="Genomic_DNA"/>
</dbReference>
<dbReference type="EMBL" id="DQ862258">
    <property type="protein sequence ID" value="ABI18767.1"/>
    <property type="molecule type" value="Genomic_DNA"/>
</dbReference>
<dbReference type="EMBL" id="DQ862259">
    <property type="protein sequence ID" value="ABI18768.1"/>
    <property type="molecule type" value="Genomic_DNA"/>
</dbReference>
<dbReference type="EMBL" id="DQ862260">
    <property type="protein sequence ID" value="ABI18769.1"/>
    <property type="molecule type" value="Genomic_DNA"/>
</dbReference>
<dbReference type="EMBL" id="DQ862261">
    <property type="protein sequence ID" value="ABI18770.1"/>
    <property type="molecule type" value="Genomic_DNA"/>
</dbReference>
<dbReference type="EMBL" id="DQ862262">
    <property type="protein sequence ID" value="ABI18771.1"/>
    <property type="molecule type" value="Genomic_DNA"/>
</dbReference>
<dbReference type="EMBL" id="DQ862263">
    <property type="protein sequence ID" value="ABI18772.1"/>
    <property type="molecule type" value="Genomic_DNA"/>
</dbReference>
<dbReference type="EMBL" id="DQ862264">
    <property type="protein sequence ID" value="ABI18773.1"/>
    <property type="molecule type" value="Genomic_DNA"/>
</dbReference>
<dbReference type="EMBL" id="DQ862265">
    <property type="protein sequence ID" value="ABI18774.1"/>
    <property type="molecule type" value="Genomic_DNA"/>
</dbReference>
<dbReference type="EMBL" id="DQ862266">
    <property type="protein sequence ID" value="ABI18775.1"/>
    <property type="molecule type" value="Genomic_DNA"/>
</dbReference>
<dbReference type="EMBL" id="DQ862267">
    <property type="protein sequence ID" value="ABI18776.1"/>
    <property type="molecule type" value="Genomic_DNA"/>
</dbReference>
<dbReference type="EMBL" id="DQ862268">
    <property type="protein sequence ID" value="ABI18777.1"/>
    <property type="molecule type" value="Genomic_DNA"/>
</dbReference>
<dbReference type="EMBL" id="DQ862269">
    <property type="protein sequence ID" value="ABI18778.1"/>
    <property type="molecule type" value="Genomic_DNA"/>
</dbReference>
<dbReference type="EMBL" id="DQ862270">
    <property type="protein sequence ID" value="ABI18779.1"/>
    <property type="molecule type" value="Genomic_DNA"/>
</dbReference>
<dbReference type="EMBL" id="DQ862271">
    <property type="protein sequence ID" value="ABI18780.1"/>
    <property type="molecule type" value="Genomic_DNA"/>
</dbReference>
<dbReference type="EMBL" id="DQ862272">
    <property type="protein sequence ID" value="ABI18781.1"/>
    <property type="molecule type" value="Genomic_DNA"/>
</dbReference>
<dbReference type="EMBL" id="DQ862273">
    <property type="protein sequence ID" value="ABI18782.1"/>
    <property type="molecule type" value="Genomic_DNA"/>
</dbReference>
<dbReference type="EMBL" id="DQ862274">
    <property type="protein sequence ID" value="ABI18783.1"/>
    <property type="molecule type" value="Genomic_DNA"/>
</dbReference>
<dbReference type="EMBL" id="DQ862275">
    <property type="protein sequence ID" value="ABI18784.1"/>
    <property type="molecule type" value="Genomic_DNA"/>
</dbReference>
<dbReference type="EMBL" id="DQ862276">
    <property type="protein sequence ID" value="ABI18785.1"/>
    <property type="molecule type" value="Genomic_DNA"/>
</dbReference>
<dbReference type="EMBL" id="DQ862277">
    <property type="protein sequence ID" value="ABI18786.1"/>
    <property type="molecule type" value="Genomic_DNA"/>
</dbReference>
<dbReference type="EMBL" id="DQ862278">
    <property type="protein sequence ID" value="ABI18787.1"/>
    <property type="molecule type" value="Genomic_DNA"/>
</dbReference>
<dbReference type="EMBL" id="DQ862279">
    <property type="protein sequence ID" value="ABI18788.1"/>
    <property type="molecule type" value="Genomic_DNA"/>
</dbReference>
<dbReference type="EMBL" id="DQ862280">
    <property type="protein sequence ID" value="ABI18789.1"/>
    <property type="molecule type" value="Genomic_DNA"/>
</dbReference>
<dbReference type="EMBL" id="DQ862281">
    <property type="protein sequence ID" value="ABI18790.1"/>
    <property type="molecule type" value="Genomic_DNA"/>
</dbReference>
<dbReference type="EMBL" id="DQ862282">
    <property type="protein sequence ID" value="ABI18791.1"/>
    <property type="molecule type" value="Genomic_DNA"/>
</dbReference>
<dbReference type="EMBL" id="DQ862283">
    <property type="protein sequence ID" value="ABI18792.1"/>
    <property type="molecule type" value="Genomic_DNA"/>
</dbReference>
<dbReference type="EMBL" id="DQ862284">
    <property type="protein sequence ID" value="ABI18793.1"/>
    <property type="molecule type" value="Genomic_DNA"/>
</dbReference>
<dbReference type="EMBL" id="DQ862285">
    <property type="protein sequence ID" value="ABI18794.1"/>
    <property type="molecule type" value="Genomic_DNA"/>
</dbReference>
<dbReference type="EMBL" id="DQ862286">
    <property type="protein sequence ID" value="ABI18795.1"/>
    <property type="molecule type" value="Genomic_DNA"/>
</dbReference>
<dbReference type="EMBL" id="DQ862287">
    <property type="protein sequence ID" value="ABI18796.1"/>
    <property type="molecule type" value="Genomic_DNA"/>
</dbReference>
<dbReference type="EMBL" id="DQ862288">
    <property type="protein sequence ID" value="ABI18797.1"/>
    <property type="molecule type" value="Genomic_DNA"/>
</dbReference>
<dbReference type="EMBL" id="DQ862289">
    <property type="protein sequence ID" value="ABI18798.1"/>
    <property type="molecule type" value="Genomic_DNA"/>
</dbReference>
<dbReference type="EMBL" id="DQ862290">
    <property type="protein sequence ID" value="ABI18799.1"/>
    <property type="molecule type" value="Genomic_DNA"/>
</dbReference>
<dbReference type="EMBL" id="DQ862291">
    <property type="protein sequence ID" value="ABI18800.1"/>
    <property type="molecule type" value="Genomic_DNA"/>
</dbReference>
<dbReference type="EMBL" id="DQ862292">
    <property type="protein sequence ID" value="ABI18801.1"/>
    <property type="molecule type" value="Genomic_DNA"/>
</dbReference>
<dbReference type="EMBL" id="DQ862293">
    <property type="protein sequence ID" value="ABI18802.1"/>
    <property type="molecule type" value="Genomic_DNA"/>
</dbReference>
<dbReference type="EMBL" id="DQ862294">
    <property type="protein sequence ID" value="ABI18803.1"/>
    <property type="molecule type" value="Genomic_DNA"/>
</dbReference>
<dbReference type="GO" id="GO:0005576">
    <property type="term" value="C:extracellular region"/>
    <property type="evidence" value="ECO:0007669"/>
    <property type="project" value="UniProtKB-SubCell"/>
</dbReference>
<dbReference type="GO" id="GO:0016020">
    <property type="term" value="C:membrane"/>
    <property type="evidence" value="ECO:0007669"/>
    <property type="project" value="UniProtKB-SubCell"/>
</dbReference>
<dbReference type="GO" id="GO:0045735">
    <property type="term" value="F:nutrient reservoir activity"/>
    <property type="evidence" value="ECO:0007669"/>
    <property type="project" value="InterPro"/>
</dbReference>
<dbReference type="GO" id="GO:0004867">
    <property type="term" value="F:serine-type endopeptidase inhibitor activity"/>
    <property type="evidence" value="ECO:0007669"/>
    <property type="project" value="InterPro"/>
</dbReference>
<dbReference type="GO" id="GO:0090729">
    <property type="term" value="F:toxin activity"/>
    <property type="evidence" value="ECO:0007669"/>
    <property type="project" value="UniProtKB-KW"/>
</dbReference>
<dbReference type="GO" id="GO:0042742">
    <property type="term" value="P:defense response to bacterium"/>
    <property type="evidence" value="ECO:0007669"/>
    <property type="project" value="UniProtKB-KW"/>
</dbReference>
<dbReference type="CDD" id="cd00261">
    <property type="entry name" value="AAI_SS"/>
    <property type="match status" value="1"/>
</dbReference>
<dbReference type="Gene3D" id="1.10.110.10">
    <property type="entry name" value="Plant lipid-transfer and hydrophobic proteins"/>
    <property type="match status" value="1"/>
</dbReference>
<dbReference type="InterPro" id="IPR006106">
    <property type="entry name" value="Allergen/soft/tryp_amyl_inhib"/>
</dbReference>
<dbReference type="InterPro" id="IPR036312">
    <property type="entry name" value="Bifun_inhib/LTP/seed_sf"/>
</dbReference>
<dbReference type="InterPro" id="IPR016140">
    <property type="entry name" value="Bifunc_inhib/LTP/seed_store"/>
</dbReference>
<dbReference type="InterPro" id="IPR001954">
    <property type="entry name" value="Glia_glutenin"/>
</dbReference>
<dbReference type="PANTHER" id="PTHR33454">
    <property type="entry name" value="PROLAMIN PPROL 14P"/>
    <property type="match status" value="1"/>
</dbReference>
<dbReference type="PANTHER" id="PTHR33454:SF10">
    <property type="entry name" value="PUROINDOLINE-B"/>
    <property type="match status" value="1"/>
</dbReference>
<dbReference type="Pfam" id="PF00234">
    <property type="entry name" value="Tryp_alpha_amyl"/>
    <property type="match status" value="1"/>
</dbReference>
<dbReference type="PRINTS" id="PR00808">
    <property type="entry name" value="AMLASEINHBTR"/>
</dbReference>
<dbReference type="SMART" id="SM00499">
    <property type="entry name" value="AAI"/>
    <property type="match status" value="1"/>
</dbReference>
<dbReference type="SUPFAM" id="SSF47699">
    <property type="entry name" value="Bifunctional inhibitor/lipid-transfer protein/seed storage 2S albumin"/>
    <property type="match status" value="1"/>
</dbReference>
<sequence>MKTLFLLAILALVASTTFAQYSVGGGYNDVGGGGGSQQCPQERPNLGSCKDYVMERCFTMKDFPLTWPTKWWKGGCEQEVREKCCQQLSQIAPQCRCDAIRGVIQGKLGGIFGIGGGDVFKQIQRAQILPSKCNMGADCKFPSGYYW</sequence>
<comment type="function">
    <text evidence="1 5">Acts as a membranotoxin, probably through its antibacterial and antifungal activities, contributing to the defense mechanism of the plant against predators. Forms monovalent cation-selective ion channels in membranes (By similarity). Contributes to grain texture and hardness.</text>
</comment>
<comment type="subcellular location">
    <subcellularLocation>
        <location evidence="1">Membrane</location>
    </subcellularLocation>
    <subcellularLocation>
        <location evidence="1">Secreted</location>
        <location evidence="1">Extracellular space</location>
    </subcellularLocation>
</comment>
<comment type="tissue specificity">
    <text evidence="4">Found in endosperm and aleurone layer of developing kernels, but not in the embryo.</text>
</comment>
<comment type="PTM">
    <text evidence="1">Five disulfide bonds are present.</text>
</comment>